<gene>
    <name evidence="1" type="primary">rpmJ</name>
    <name type="ordered locus">FTL_0257</name>
</gene>
<protein>
    <recommendedName>
        <fullName evidence="1">Large ribosomal subunit protein bL36</fullName>
    </recommendedName>
    <alternativeName>
        <fullName evidence="2">50S ribosomal protein L36</fullName>
    </alternativeName>
</protein>
<evidence type="ECO:0000255" key="1">
    <source>
        <dbReference type="HAMAP-Rule" id="MF_00251"/>
    </source>
</evidence>
<evidence type="ECO:0000305" key="2"/>
<proteinExistence type="inferred from homology"/>
<organism>
    <name type="scientific">Francisella tularensis subsp. holarctica (strain LVS)</name>
    <dbReference type="NCBI Taxonomy" id="376619"/>
    <lineage>
        <taxon>Bacteria</taxon>
        <taxon>Pseudomonadati</taxon>
        <taxon>Pseudomonadota</taxon>
        <taxon>Gammaproteobacteria</taxon>
        <taxon>Thiotrichales</taxon>
        <taxon>Francisellaceae</taxon>
        <taxon>Francisella</taxon>
    </lineage>
</organism>
<comment type="similarity">
    <text evidence="1">Belongs to the bacterial ribosomal protein bL36 family.</text>
</comment>
<accession>Q2A5E9</accession>
<dbReference type="EMBL" id="AM233362">
    <property type="protein sequence ID" value="CAJ78698.1"/>
    <property type="molecule type" value="Genomic_DNA"/>
</dbReference>
<dbReference type="RefSeq" id="WP_003017816.1">
    <property type="nucleotide sequence ID" value="NZ_CP009694.1"/>
</dbReference>
<dbReference type="SMR" id="Q2A5E9"/>
<dbReference type="GeneID" id="93254575"/>
<dbReference type="KEGG" id="ftl:FTL_0257"/>
<dbReference type="Proteomes" id="UP000001944">
    <property type="component" value="Chromosome"/>
</dbReference>
<dbReference type="GO" id="GO:0005737">
    <property type="term" value="C:cytoplasm"/>
    <property type="evidence" value="ECO:0007669"/>
    <property type="project" value="UniProtKB-ARBA"/>
</dbReference>
<dbReference type="GO" id="GO:1990904">
    <property type="term" value="C:ribonucleoprotein complex"/>
    <property type="evidence" value="ECO:0007669"/>
    <property type="project" value="UniProtKB-KW"/>
</dbReference>
<dbReference type="GO" id="GO:0005840">
    <property type="term" value="C:ribosome"/>
    <property type="evidence" value="ECO:0007669"/>
    <property type="project" value="UniProtKB-KW"/>
</dbReference>
<dbReference type="GO" id="GO:0003735">
    <property type="term" value="F:structural constituent of ribosome"/>
    <property type="evidence" value="ECO:0007669"/>
    <property type="project" value="InterPro"/>
</dbReference>
<dbReference type="GO" id="GO:0006412">
    <property type="term" value="P:translation"/>
    <property type="evidence" value="ECO:0007669"/>
    <property type="project" value="UniProtKB-UniRule"/>
</dbReference>
<dbReference type="HAMAP" id="MF_00251">
    <property type="entry name" value="Ribosomal_bL36"/>
    <property type="match status" value="1"/>
</dbReference>
<dbReference type="InterPro" id="IPR000473">
    <property type="entry name" value="Ribosomal_bL36"/>
</dbReference>
<dbReference type="InterPro" id="IPR035977">
    <property type="entry name" value="Ribosomal_bL36_sp"/>
</dbReference>
<dbReference type="NCBIfam" id="TIGR01022">
    <property type="entry name" value="rpmJ_bact"/>
    <property type="match status" value="1"/>
</dbReference>
<dbReference type="PANTHER" id="PTHR42888">
    <property type="entry name" value="50S RIBOSOMAL PROTEIN L36, CHLOROPLASTIC"/>
    <property type="match status" value="1"/>
</dbReference>
<dbReference type="PANTHER" id="PTHR42888:SF1">
    <property type="entry name" value="LARGE RIBOSOMAL SUBUNIT PROTEIN BL36C"/>
    <property type="match status" value="1"/>
</dbReference>
<dbReference type="Pfam" id="PF00444">
    <property type="entry name" value="Ribosomal_L36"/>
    <property type="match status" value="1"/>
</dbReference>
<dbReference type="SUPFAM" id="SSF57840">
    <property type="entry name" value="Ribosomal protein L36"/>
    <property type="match status" value="1"/>
</dbReference>
<dbReference type="PROSITE" id="PS00828">
    <property type="entry name" value="RIBOSOMAL_L36"/>
    <property type="match status" value="1"/>
</dbReference>
<reference key="1">
    <citation type="submission" date="2006-03" db="EMBL/GenBank/DDBJ databases">
        <title>Complete genome sequence of Francisella tularensis LVS (Live Vaccine Strain).</title>
        <authorList>
            <person name="Chain P."/>
            <person name="Larimer F."/>
            <person name="Land M."/>
            <person name="Stilwagen S."/>
            <person name="Larsson P."/>
            <person name="Bearden S."/>
            <person name="Chu M."/>
            <person name="Oyston P."/>
            <person name="Forsman M."/>
            <person name="Andersson S."/>
            <person name="Lindler L."/>
            <person name="Titball R."/>
            <person name="Garcia E."/>
        </authorList>
    </citation>
    <scope>NUCLEOTIDE SEQUENCE [LARGE SCALE GENOMIC DNA]</scope>
    <source>
        <strain>LVS</strain>
    </source>
</reference>
<sequence length="37" mass="4423">MKVRASVKKMCRNCKVIKRNRVVRVICTDPRHKQRQG</sequence>
<keyword id="KW-1185">Reference proteome</keyword>
<keyword id="KW-0687">Ribonucleoprotein</keyword>
<keyword id="KW-0689">Ribosomal protein</keyword>
<feature type="chain" id="PRO_0000302203" description="Large ribosomal subunit protein bL36">
    <location>
        <begin position="1"/>
        <end position="37"/>
    </location>
</feature>
<name>RL36_FRATH</name>